<organism>
    <name type="scientific">Mycobacterium tuberculosis (strain ATCC 25618 / H37Rv)</name>
    <dbReference type="NCBI Taxonomy" id="83332"/>
    <lineage>
        <taxon>Bacteria</taxon>
        <taxon>Bacillati</taxon>
        <taxon>Actinomycetota</taxon>
        <taxon>Actinomycetes</taxon>
        <taxon>Mycobacteriales</taxon>
        <taxon>Mycobacteriaceae</taxon>
        <taxon>Mycobacterium</taxon>
        <taxon>Mycobacterium tuberculosis complex</taxon>
    </lineage>
</organism>
<comment type="subcellular location">
    <subcellularLocation>
        <location evidence="2">Cell membrane</location>
        <topology evidence="2">Multi-pass membrane protein</topology>
    </subcellularLocation>
</comment>
<dbReference type="EMBL" id="AL123456">
    <property type="protein sequence ID" value="CCP43630.1"/>
    <property type="molecule type" value="Genomic_DNA"/>
</dbReference>
<dbReference type="PIR" id="G70780">
    <property type="entry name" value="G70780"/>
</dbReference>
<dbReference type="RefSeq" id="NP_215397.1">
    <property type="nucleotide sequence ID" value="NC_000962.3"/>
</dbReference>
<dbReference type="RefSeq" id="WP_003404614.1">
    <property type="nucleotide sequence ID" value="NZ_NVQJ01000001.1"/>
</dbReference>
<dbReference type="SMR" id="P9WKQ9"/>
<dbReference type="STRING" id="83332.Rv0882"/>
<dbReference type="PaxDb" id="83332-Rv0882"/>
<dbReference type="DNASU" id="885248"/>
<dbReference type="GeneID" id="885248"/>
<dbReference type="KEGG" id="mtu:Rv0882"/>
<dbReference type="KEGG" id="mtv:RVBD_0882"/>
<dbReference type="TubercuList" id="Rv0882"/>
<dbReference type="eggNOG" id="ENOG5033P34">
    <property type="taxonomic scope" value="Bacteria"/>
</dbReference>
<dbReference type="InParanoid" id="P9WKQ9"/>
<dbReference type="OrthoDB" id="4566858at2"/>
<dbReference type="Proteomes" id="UP000001584">
    <property type="component" value="Chromosome"/>
</dbReference>
<dbReference type="GO" id="GO:0005886">
    <property type="term" value="C:plasma membrane"/>
    <property type="evidence" value="ECO:0007669"/>
    <property type="project" value="UniProtKB-SubCell"/>
</dbReference>
<dbReference type="InterPro" id="IPR024244">
    <property type="entry name" value="DUF2537"/>
</dbReference>
<dbReference type="Pfam" id="PF10801">
    <property type="entry name" value="DUF2537"/>
    <property type="match status" value="1"/>
</dbReference>
<reference key="1">
    <citation type="journal article" date="1998" name="Nature">
        <title>Deciphering the biology of Mycobacterium tuberculosis from the complete genome sequence.</title>
        <authorList>
            <person name="Cole S.T."/>
            <person name="Brosch R."/>
            <person name="Parkhill J."/>
            <person name="Garnier T."/>
            <person name="Churcher C.M."/>
            <person name="Harris D.E."/>
            <person name="Gordon S.V."/>
            <person name="Eiglmeier K."/>
            <person name="Gas S."/>
            <person name="Barry C.E. III"/>
            <person name="Tekaia F."/>
            <person name="Badcock K."/>
            <person name="Basham D."/>
            <person name="Brown D."/>
            <person name="Chillingworth T."/>
            <person name="Connor R."/>
            <person name="Davies R.M."/>
            <person name="Devlin K."/>
            <person name="Feltwell T."/>
            <person name="Gentles S."/>
            <person name="Hamlin N."/>
            <person name="Holroyd S."/>
            <person name="Hornsby T."/>
            <person name="Jagels K."/>
            <person name="Krogh A."/>
            <person name="McLean J."/>
            <person name="Moule S."/>
            <person name="Murphy L.D."/>
            <person name="Oliver S."/>
            <person name="Osborne J."/>
            <person name="Quail M.A."/>
            <person name="Rajandream M.A."/>
            <person name="Rogers J."/>
            <person name="Rutter S."/>
            <person name="Seeger K."/>
            <person name="Skelton S."/>
            <person name="Squares S."/>
            <person name="Squares R."/>
            <person name="Sulston J.E."/>
            <person name="Taylor K."/>
            <person name="Whitehead S."/>
            <person name="Barrell B.G."/>
        </authorList>
    </citation>
    <scope>NUCLEOTIDE SEQUENCE [LARGE SCALE GENOMIC DNA]</scope>
    <source>
        <strain>ATCC 25618 / H37Rv</strain>
    </source>
</reference>
<feature type="signal peptide" evidence="1">
    <location>
        <begin position="1"/>
        <end position="26"/>
    </location>
</feature>
<feature type="chain" id="PRO_0000014081" description="Uncharacterized protein Rv0882">
    <location>
        <begin position="27"/>
        <end position="94"/>
    </location>
</feature>
<feature type="transmembrane region" description="Helical" evidence="1">
    <location>
        <begin position="42"/>
        <end position="62"/>
    </location>
</feature>
<feature type="transmembrane region" description="Helical" evidence="1">
    <location>
        <begin position="71"/>
        <end position="91"/>
    </location>
</feature>
<proteinExistence type="inferred from homology"/>
<protein>
    <recommendedName>
        <fullName>Uncharacterized protein Rv0882</fullName>
    </recommendedName>
</protein>
<sequence length="94" mass="9662">MNDQRDQAVPWATGLAVAGFVAAVIAVAVVVLSLGLIRVHPLLAVGLNIVAVSGLAPTLWGWRRTPVLRWFVLGAAVGVAGAWLALLALTLGDG</sequence>
<keyword id="KW-1003">Cell membrane</keyword>
<keyword id="KW-0472">Membrane</keyword>
<keyword id="KW-1185">Reference proteome</keyword>
<keyword id="KW-0732">Signal</keyword>
<keyword id="KW-0812">Transmembrane</keyword>
<keyword id="KW-1133">Transmembrane helix</keyword>
<accession>P9WKQ9</accession>
<accession>L0T520</accession>
<accession>P64737</accession>
<accession>Q10544</accession>
<evidence type="ECO:0000255" key="1"/>
<evidence type="ECO:0000305" key="2"/>
<gene>
    <name type="ordered locus">Rv0882</name>
    <name type="ORF">MTCY31.10</name>
</gene>
<name>Y882_MYCTU</name>